<proteinExistence type="inferred from homology"/>
<evidence type="ECO:0000255" key="1">
    <source>
        <dbReference type="HAMAP-Rule" id="MF_00318"/>
    </source>
</evidence>
<evidence type="ECO:0000305" key="2"/>
<dbReference type="EC" id="4.2.1.11" evidence="1"/>
<dbReference type="EMBL" id="AE003849">
    <property type="protein sequence ID" value="AAF84100.1"/>
    <property type="status" value="ALT_INIT"/>
    <property type="molecule type" value="Genomic_DNA"/>
</dbReference>
<dbReference type="PIR" id="F82700">
    <property type="entry name" value="F82700"/>
</dbReference>
<dbReference type="RefSeq" id="WP_023906786.1">
    <property type="nucleotide sequence ID" value="NC_002488.3"/>
</dbReference>
<dbReference type="SMR" id="Q9PDT8"/>
<dbReference type="STRING" id="160492.XF_1291"/>
<dbReference type="KEGG" id="xfa:XF_1291"/>
<dbReference type="eggNOG" id="COG0148">
    <property type="taxonomic scope" value="Bacteria"/>
</dbReference>
<dbReference type="HOGENOM" id="CLU_031223_2_1_6"/>
<dbReference type="UniPathway" id="UPA00109">
    <property type="reaction ID" value="UER00187"/>
</dbReference>
<dbReference type="Proteomes" id="UP000000812">
    <property type="component" value="Chromosome"/>
</dbReference>
<dbReference type="GO" id="GO:0009986">
    <property type="term" value="C:cell surface"/>
    <property type="evidence" value="ECO:0007669"/>
    <property type="project" value="UniProtKB-SubCell"/>
</dbReference>
<dbReference type="GO" id="GO:0005576">
    <property type="term" value="C:extracellular region"/>
    <property type="evidence" value="ECO:0007669"/>
    <property type="project" value="UniProtKB-SubCell"/>
</dbReference>
<dbReference type="GO" id="GO:0000015">
    <property type="term" value="C:phosphopyruvate hydratase complex"/>
    <property type="evidence" value="ECO:0007669"/>
    <property type="project" value="InterPro"/>
</dbReference>
<dbReference type="GO" id="GO:0000287">
    <property type="term" value="F:magnesium ion binding"/>
    <property type="evidence" value="ECO:0007669"/>
    <property type="project" value="UniProtKB-UniRule"/>
</dbReference>
<dbReference type="GO" id="GO:0004634">
    <property type="term" value="F:phosphopyruvate hydratase activity"/>
    <property type="evidence" value="ECO:0007669"/>
    <property type="project" value="UniProtKB-UniRule"/>
</dbReference>
<dbReference type="GO" id="GO:0006096">
    <property type="term" value="P:glycolytic process"/>
    <property type="evidence" value="ECO:0007669"/>
    <property type="project" value="UniProtKB-UniRule"/>
</dbReference>
<dbReference type="CDD" id="cd03313">
    <property type="entry name" value="enolase"/>
    <property type="match status" value="1"/>
</dbReference>
<dbReference type="FunFam" id="3.20.20.120:FF:000001">
    <property type="entry name" value="Enolase"/>
    <property type="match status" value="1"/>
</dbReference>
<dbReference type="FunFam" id="3.30.390.10:FF:000001">
    <property type="entry name" value="Enolase"/>
    <property type="match status" value="1"/>
</dbReference>
<dbReference type="Gene3D" id="3.20.20.120">
    <property type="entry name" value="Enolase-like C-terminal domain"/>
    <property type="match status" value="1"/>
</dbReference>
<dbReference type="Gene3D" id="3.30.390.10">
    <property type="entry name" value="Enolase-like, N-terminal domain"/>
    <property type="match status" value="1"/>
</dbReference>
<dbReference type="HAMAP" id="MF_00318">
    <property type="entry name" value="Enolase"/>
    <property type="match status" value="1"/>
</dbReference>
<dbReference type="InterPro" id="IPR000941">
    <property type="entry name" value="Enolase"/>
</dbReference>
<dbReference type="InterPro" id="IPR036849">
    <property type="entry name" value="Enolase-like_C_sf"/>
</dbReference>
<dbReference type="InterPro" id="IPR029017">
    <property type="entry name" value="Enolase-like_N"/>
</dbReference>
<dbReference type="InterPro" id="IPR020810">
    <property type="entry name" value="Enolase_C"/>
</dbReference>
<dbReference type="InterPro" id="IPR020809">
    <property type="entry name" value="Enolase_CS"/>
</dbReference>
<dbReference type="InterPro" id="IPR020811">
    <property type="entry name" value="Enolase_N"/>
</dbReference>
<dbReference type="NCBIfam" id="TIGR01060">
    <property type="entry name" value="eno"/>
    <property type="match status" value="1"/>
</dbReference>
<dbReference type="PANTHER" id="PTHR11902">
    <property type="entry name" value="ENOLASE"/>
    <property type="match status" value="1"/>
</dbReference>
<dbReference type="PANTHER" id="PTHR11902:SF1">
    <property type="entry name" value="ENOLASE"/>
    <property type="match status" value="1"/>
</dbReference>
<dbReference type="Pfam" id="PF00113">
    <property type="entry name" value="Enolase_C"/>
    <property type="match status" value="1"/>
</dbReference>
<dbReference type="Pfam" id="PF03952">
    <property type="entry name" value="Enolase_N"/>
    <property type="match status" value="1"/>
</dbReference>
<dbReference type="PIRSF" id="PIRSF001400">
    <property type="entry name" value="Enolase"/>
    <property type="match status" value="1"/>
</dbReference>
<dbReference type="PRINTS" id="PR00148">
    <property type="entry name" value="ENOLASE"/>
</dbReference>
<dbReference type="SFLD" id="SFLDS00001">
    <property type="entry name" value="Enolase"/>
    <property type="match status" value="1"/>
</dbReference>
<dbReference type="SFLD" id="SFLDF00002">
    <property type="entry name" value="enolase"/>
    <property type="match status" value="1"/>
</dbReference>
<dbReference type="SMART" id="SM01192">
    <property type="entry name" value="Enolase_C"/>
    <property type="match status" value="1"/>
</dbReference>
<dbReference type="SMART" id="SM01193">
    <property type="entry name" value="Enolase_N"/>
    <property type="match status" value="1"/>
</dbReference>
<dbReference type="SUPFAM" id="SSF51604">
    <property type="entry name" value="Enolase C-terminal domain-like"/>
    <property type="match status" value="1"/>
</dbReference>
<dbReference type="SUPFAM" id="SSF54826">
    <property type="entry name" value="Enolase N-terminal domain-like"/>
    <property type="match status" value="1"/>
</dbReference>
<dbReference type="PROSITE" id="PS00164">
    <property type="entry name" value="ENOLASE"/>
    <property type="match status" value="1"/>
</dbReference>
<sequence>MTAIAKIYAREILDSRGNPTLEAEVTLENAVCGRAAVPSGASTGTKEAVELRDGDKTRYLGKGVRAAVDNVNGVIAAALVGFDGADQTGLDHRLINLDGTENKGRLGANALLGVSLATAHAVAAARKQPLWMYLSTLGESKVSLPVPMMNIINGGAHADNNVDFQEFMVLPVGFASFSEALRAGTEIFHALKSVLKGQGLSTAVGDEGGFAPDLRSNVEALDAILEAIGRAGYIAGEDVLLGLDVASSEFRDNGKYNLVGENKRLTSEQFVDFLDDWVTQYPIISIEDGLAEDDWAGWKQLTERIGHKVQLVGDDLFVTNPKVFQEGITSGIANAILIKLNQIGTLTETLESIAMAHRAQYAAIVSHRSGETEDTSIADIAVATTATQIKTGSLCRSDRVAKYNQLLRIEQALGVGARYAGRDAFVSLKS</sequence>
<name>ENO_XYLFA</name>
<protein>
    <recommendedName>
        <fullName evidence="1">Enolase</fullName>
        <ecNumber evidence="1">4.2.1.11</ecNumber>
    </recommendedName>
    <alternativeName>
        <fullName evidence="1">2-phospho-D-glycerate hydro-lyase</fullName>
    </alternativeName>
    <alternativeName>
        <fullName evidence="1">2-phosphoglycerate dehydratase</fullName>
    </alternativeName>
</protein>
<organism>
    <name type="scientific">Xylella fastidiosa (strain 9a5c)</name>
    <dbReference type="NCBI Taxonomy" id="160492"/>
    <lineage>
        <taxon>Bacteria</taxon>
        <taxon>Pseudomonadati</taxon>
        <taxon>Pseudomonadota</taxon>
        <taxon>Gammaproteobacteria</taxon>
        <taxon>Lysobacterales</taxon>
        <taxon>Lysobacteraceae</taxon>
        <taxon>Xylella</taxon>
    </lineage>
</organism>
<feature type="chain" id="PRO_0000134014" description="Enolase">
    <location>
        <begin position="1"/>
        <end position="430"/>
    </location>
</feature>
<feature type="active site" description="Proton donor" evidence="1">
    <location>
        <position position="207"/>
    </location>
</feature>
<feature type="active site" description="Proton acceptor" evidence="1">
    <location>
        <position position="339"/>
    </location>
</feature>
<feature type="binding site" evidence="1">
    <location>
        <position position="165"/>
    </location>
    <ligand>
        <name>(2R)-2-phosphoglycerate</name>
        <dbReference type="ChEBI" id="CHEBI:58289"/>
    </ligand>
</feature>
<feature type="binding site" evidence="1">
    <location>
        <position position="244"/>
    </location>
    <ligand>
        <name>Mg(2+)</name>
        <dbReference type="ChEBI" id="CHEBI:18420"/>
    </ligand>
</feature>
<feature type="binding site" evidence="1">
    <location>
        <position position="287"/>
    </location>
    <ligand>
        <name>Mg(2+)</name>
        <dbReference type="ChEBI" id="CHEBI:18420"/>
    </ligand>
</feature>
<feature type="binding site" evidence="1">
    <location>
        <position position="314"/>
    </location>
    <ligand>
        <name>Mg(2+)</name>
        <dbReference type="ChEBI" id="CHEBI:18420"/>
    </ligand>
</feature>
<feature type="binding site" evidence="1">
    <location>
        <position position="339"/>
    </location>
    <ligand>
        <name>(2R)-2-phosphoglycerate</name>
        <dbReference type="ChEBI" id="CHEBI:58289"/>
    </ligand>
</feature>
<feature type="binding site" evidence="1">
    <location>
        <position position="368"/>
    </location>
    <ligand>
        <name>(2R)-2-phosphoglycerate</name>
        <dbReference type="ChEBI" id="CHEBI:58289"/>
    </ligand>
</feature>
<feature type="binding site" evidence="1">
    <location>
        <position position="369"/>
    </location>
    <ligand>
        <name>(2R)-2-phosphoglycerate</name>
        <dbReference type="ChEBI" id="CHEBI:58289"/>
    </ligand>
</feature>
<feature type="binding site" evidence="1">
    <location>
        <position position="390"/>
    </location>
    <ligand>
        <name>(2R)-2-phosphoglycerate</name>
        <dbReference type="ChEBI" id="CHEBI:58289"/>
    </ligand>
</feature>
<gene>
    <name evidence="1" type="primary">eno</name>
    <name type="ordered locus">XF_1291</name>
</gene>
<reference key="1">
    <citation type="journal article" date="2000" name="Nature">
        <title>The genome sequence of the plant pathogen Xylella fastidiosa.</title>
        <authorList>
            <person name="Simpson A.J.G."/>
            <person name="Reinach F.C."/>
            <person name="Arruda P."/>
            <person name="Abreu F.A."/>
            <person name="Acencio M."/>
            <person name="Alvarenga R."/>
            <person name="Alves L.M.C."/>
            <person name="Araya J.E."/>
            <person name="Baia G.S."/>
            <person name="Baptista C.S."/>
            <person name="Barros M.H."/>
            <person name="Bonaccorsi E.D."/>
            <person name="Bordin S."/>
            <person name="Bove J.M."/>
            <person name="Briones M.R.S."/>
            <person name="Bueno M.R.P."/>
            <person name="Camargo A.A."/>
            <person name="Camargo L.E.A."/>
            <person name="Carraro D.M."/>
            <person name="Carrer H."/>
            <person name="Colauto N.B."/>
            <person name="Colombo C."/>
            <person name="Costa F.F."/>
            <person name="Costa M.C.R."/>
            <person name="Costa-Neto C.M."/>
            <person name="Coutinho L.L."/>
            <person name="Cristofani M."/>
            <person name="Dias-Neto E."/>
            <person name="Docena C."/>
            <person name="El-Dorry H."/>
            <person name="Facincani A.P."/>
            <person name="Ferreira A.J.S."/>
            <person name="Ferreira V.C.A."/>
            <person name="Ferro J.A."/>
            <person name="Fraga J.S."/>
            <person name="Franca S.C."/>
            <person name="Franco M.C."/>
            <person name="Frohme M."/>
            <person name="Furlan L.R."/>
            <person name="Garnier M."/>
            <person name="Goldman G.H."/>
            <person name="Goldman M.H.S."/>
            <person name="Gomes S.L."/>
            <person name="Gruber A."/>
            <person name="Ho P.L."/>
            <person name="Hoheisel J.D."/>
            <person name="Junqueira M.L."/>
            <person name="Kemper E.L."/>
            <person name="Kitajima J.P."/>
            <person name="Krieger J.E."/>
            <person name="Kuramae E.E."/>
            <person name="Laigret F."/>
            <person name="Lambais M.R."/>
            <person name="Leite L.C.C."/>
            <person name="Lemos E.G.M."/>
            <person name="Lemos M.V.F."/>
            <person name="Lopes S.A."/>
            <person name="Lopes C.R."/>
            <person name="Machado J.A."/>
            <person name="Machado M.A."/>
            <person name="Madeira A.M.B.N."/>
            <person name="Madeira H.M.F."/>
            <person name="Marino C.L."/>
            <person name="Marques M.V."/>
            <person name="Martins E.A.L."/>
            <person name="Martins E.M.F."/>
            <person name="Matsukuma A.Y."/>
            <person name="Menck C.F.M."/>
            <person name="Miracca E.C."/>
            <person name="Miyaki C.Y."/>
            <person name="Monteiro-Vitorello C.B."/>
            <person name="Moon D.H."/>
            <person name="Nagai M.A."/>
            <person name="Nascimento A.L.T.O."/>
            <person name="Netto L.E.S."/>
            <person name="Nhani A. Jr."/>
            <person name="Nobrega F.G."/>
            <person name="Nunes L.R."/>
            <person name="Oliveira M.A."/>
            <person name="de Oliveira M.C."/>
            <person name="de Oliveira R.C."/>
            <person name="Palmieri D.A."/>
            <person name="Paris A."/>
            <person name="Peixoto B.R."/>
            <person name="Pereira G.A.G."/>
            <person name="Pereira H.A. Jr."/>
            <person name="Pesquero J.B."/>
            <person name="Quaggio R.B."/>
            <person name="Roberto P.G."/>
            <person name="Rodrigues V."/>
            <person name="de Rosa A.J.M."/>
            <person name="de Rosa V.E. Jr."/>
            <person name="de Sa R.G."/>
            <person name="Santelli R.V."/>
            <person name="Sawasaki H.E."/>
            <person name="da Silva A.C.R."/>
            <person name="da Silva A.M."/>
            <person name="da Silva F.R."/>
            <person name="Silva W.A. Jr."/>
            <person name="da Silveira J.F."/>
            <person name="Silvestri M.L.Z."/>
            <person name="Siqueira W.J."/>
            <person name="de Souza A.A."/>
            <person name="de Souza A.P."/>
            <person name="Terenzi M.F."/>
            <person name="Truffi D."/>
            <person name="Tsai S.M."/>
            <person name="Tsuhako M.H."/>
            <person name="Vallada H."/>
            <person name="Van Sluys M.A."/>
            <person name="Verjovski-Almeida S."/>
            <person name="Vettore A.L."/>
            <person name="Zago M.A."/>
            <person name="Zatz M."/>
            <person name="Meidanis J."/>
            <person name="Setubal J.C."/>
        </authorList>
    </citation>
    <scope>NUCLEOTIDE SEQUENCE [LARGE SCALE GENOMIC DNA]</scope>
    <source>
        <strain>9a5c</strain>
    </source>
</reference>
<accession>Q9PDT8</accession>
<keyword id="KW-0963">Cytoplasm</keyword>
<keyword id="KW-0324">Glycolysis</keyword>
<keyword id="KW-0456">Lyase</keyword>
<keyword id="KW-0460">Magnesium</keyword>
<keyword id="KW-0479">Metal-binding</keyword>
<keyword id="KW-0964">Secreted</keyword>
<comment type="function">
    <text evidence="1">Catalyzes the reversible conversion of 2-phosphoglycerate (2-PG) into phosphoenolpyruvate (PEP). It is essential for the degradation of carbohydrates via glycolysis.</text>
</comment>
<comment type="catalytic activity">
    <reaction evidence="1">
        <text>(2R)-2-phosphoglycerate = phosphoenolpyruvate + H2O</text>
        <dbReference type="Rhea" id="RHEA:10164"/>
        <dbReference type="ChEBI" id="CHEBI:15377"/>
        <dbReference type="ChEBI" id="CHEBI:58289"/>
        <dbReference type="ChEBI" id="CHEBI:58702"/>
        <dbReference type="EC" id="4.2.1.11"/>
    </reaction>
</comment>
<comment type="cofactor">
    <cofactor evidence="1">
        <name>Mg(2+)</name>
        <dbReference type="ChEBI" id="CHEBI:18420"/>
    </cofactor>
    <text evidence="1">Binds a second Mg(2+) ion via substrate during catalysis.</text>
</comment>
<comment type="pathway">
    <text evidence="1">Carbohydrate degradation; glycolysis; pyruvate from D-glyceraldehyde 3-phosphate: step 4/5.</text>
</comment>
<comment type="subunit">
    <text evidence="1">Component of the RNA degradosome, a multiprotein complex involved in RNA processing and mRNA degradation.</text>
</comment>
<comment type="subcellular location">
    <subcellularLocation>
        <location evidence="1">Cytoplasm</location>
    </subcellularLocation>
    <subcellularLocation>
        <location evidence="1">Secreted</location>
    </subcellularLocation>
    <subcellularLocation>
        <location evidence="1">Cell surface</location>
    </subcellularLocation>
    <text evidence="1">Fractions of enolase are present in both the cytoplasm and on the cell surface.</text>
</comment>
<comment type="similarity">
    <text evidence="1">Belongs to the enolase family.</text>
</comment>
<comment type="sequence caution" evidence="2">
    <conflict type="erroneous initiation">
        <sequence resource="EMBL-CDS" id="AAF84100"/>
    </conflict>
    <text>Extended N-terminus.</text>
</comment>